<dbReference type="PIR" id="B31438">
    <property type="entry name" value="B31438"/>
</dbReference>
<dbReference type="SMR" id="P05582"/>
<dbReference type="GO" id="GO:0005576">
    <property type="term" value="C:extracellular region"/>
    <property type="evidence" value="ECO:0007669"/>
    <property type="project" value="UniProtKB-SubCell"/>
</dbReference>
<dbReference type="GO" id="GO:0004867">
    <property type="term" value="F:serine-type endopeptidase inhibitor activity"/>
    <property type="evidence" value="ECO:0007669"/>
    <property type="project" value="UniProtKB-KW"/>
</dbReference>
<dbReference type="CDD" id="cd00104">
    <property type="entry name" value="KAZAL_FS"/>
    <property type="match status" value="1"/>
</dbReference>
<dbReference type="FunFam" id="3.30.60.30:FF:000037">
    <property type="entry name" value="Ovomucoid"/>
    <property type="match status" value="1"/>
</dbReference>
<dbReference type="Gene3D" id="3.30.60.30">
    <property type="match status" value="1"/>
</dbReference>
<dbReference type="InterPro" id="IPR051597">
    <property type="entry name" value="Bifunctional_prot_inhibitor"/>
</dbReference>
<dbReference type="InterPro" id="IPR002350">
    <property type="entry name" value="Kazal_dom"/>
</dbReference>
<dbReference type="InterPro" id="IPR036058">
    <property type="entry name" value="Kazal_dom_sf"/>
</dbReference>
<dbReference type="PANTHER" id="PTHR47729:SF1">
    <property type="entry name" value="OVOMUCOID-LIKE-RELATED"/>
    <property type="match status" value="1"/>
</dbReference>
<dbReference type="PANTHER" id="PTHR47729">
    <property type="entry name" value="SERINE PEPTIDASE INHIBITOR, KAZAL TYPE 2, TANDEM DUPLICATE 1-RELATED"/>
    <property type="match status" value="1"/>
</dbReference>
<dbReference type="Pfam" id="PF00050">
    <property type="entry name" value="Kazal_1"/>
    <property type="match status" value="1"/>
</dbReference>
<dbReference type="SMART" id="SM00280">
    <property type="entry name" value="KAZAL"/>
    <property type="match status" value="1"/>
</dbReference>
<dbReference type="SUPFAM" id="SSF100895">
    <property type="entry name" value="Kazal-type serine protease inhibitors"/>
    <property type="match status" value="1"/>
</dbReference>
<dbReference type="PROSITE" id="PS00282">
    <property type="entry name" value="KAZAL_1"/>
    <property type="match status" value="1"/>
</dbReference>
<dbReference type="PROSITE" id="PS51465">
    <property type="entry name" value="KAZAL_2"/>
    <property type="match status" value="1"/>
</dbReference>
<keyword id="KW-0903">Direct protein sequencing</keyword>
<keyword id="KW-1015">Disulfide bond</keyword>
<keyword id="KW-0325">Glycoprotein</keyword>
<keyword id="KW-0646">Protease inhibitor</keyword>
<keyword id="KW-0677">Repeat</keyword>
<keyword id="KW-0964">Secreted</keyword>
<keyword id="KW-0722">Serine protease inhibitor</keyword>
<comment type="subcellular location">
    <subcellularLocation>
        <location>Secreted</location>
    </subcellularLocation>
</comment>
<comment type="domain">
    <text>Avian ovomucoid consists of three homologous, tandem Kazal family inhibitory domains.</text>
</comment>
<proteinExistence type="evidence at protein level"/>
<protein>
    <recommendedName>
        <fullName>Ovomucoid</fullName>
    </recommendedName>
</protein>
<sequence length="56" mass="6049">FAPVNVDCSDHPKPACLQEQKPICGSDNKTYDNKCSFCNAVVDSNGTLTLSHFGKC</sequence>
<feature type="chain" id="PRO_0000073153" description="Ovomucoid">
    <location>
        <begin position="1" status="less than"/>
        <end position="56" status="greater than"/>
    </location>
</feature>
<feature type="domain" description="Kazal-like" evidence="1">
    <location>
        <begin position="6"/>
        <end position="56"/>
    </location>
</feature>
<feature type="site" description="Reactive bond 3">
    <location>
        <begin position="18"/>
        <end position="19"/>
    </location>
</feature>
<feature type="glycosylation site" description="N-linked (GlcNAc...) asparagine">
    <location>
        <position position="45"/>
    </location>
</feature>
<feature type="disulfide bond">
    <location>
        <begin position="8"/>
        <end position="38"/>
    </location>
</feature>
<feature type="disulfide bond">
    <location>
        <begin position="16"/>
        <end position="35"/>
    </location>
</feature>
<feature type="disulfide bond">
    <location>
        <begin position="24"/>
        <end position="56"/>
    </location>
</feature>
<feature type="non-terminal residue">
    <location>
        <position position="1"/>
    </location>
</feature>
<feature type="non-terminal residue">
    <location>
        <position position="56"/>
    </location>
</feature>
<evidence type="ECO:0000255" key="1">
    <source>
        <dbReference type="PROSITE-ProRule" id="PRU00798"/>
    </source>
</evidence>
<name>IOVO_ORTVE</name>
<accession>P05582</accession>
<reference key="1">
    <citation type="journal article" date="1987" name="Biochemistry">
        <title>Ovomucoid third domains from 100 avian species: isolation, sequences, and hypervariability of enzyme-inhibitor contact residues.</title>
        <authorList>
            <person name="Laskowski M. Jr."/>
            <person name="Kato I."/>
            <person name="Ardelt W."/>
            <person name="Cook J."/>
            <person name="Denton A."/>
            <person name="Empie M.W."/>
            <person name="Kohr W.J."/>
            <person name="Park S.J."/>
            <person name="Parks K."/>
            <person name="Schatzley B.L."/>
            <person name="Schoenberger O.L."/>
            <person name="Tashiro M."/>
            <person name="Vichot G."/>
            <person name="Whatley H.E."/>
            <person name="Wieczorek A."/>
            <person name="Wieczorek M."/>
        </authorList>
    </citation>
    <scope>PROTEIN SEQUENCE</scope>
</reference>
<organism>
    <name type="scientific">Ortalis vetula</name>
    <name type="common">Plain chachalaca</name>
    <name type="synonym">Penelope vetula</name>
    <dbReference type="NCBI Taxonomy" id="8984"/>
    <lineage>
        <taxon>Eukaryota</taxon>
        <taxon>Metazoa</taxon>
        <taxon>Chordata</taxon>
        <taxon>Craniata</taxon>
        <taxon>Vertebrata</taxon>
        <taxon>Euteleostomi</taxon>
        <taxon>Archelosauria</taxon>
        <taxon>Archosauria</taxon>
        <taxon>Dinosauria</taxon>
        <taxon>Saurischia</taxon>
        <taxon>Theropoda</taxon>
        <taxon>Coelurosauria</taxon>
        <taxon>Aves</taxon>
        <taxon>Neognathae</taxon>
        <taxon>Galloanserae</taxon>
        <taxon>Galliformes</taxon>
        <taxon>Cracidae</taxon>
        <taxon>Ortalis</taxon>
    </lineage>
</organism>